<accession>P02747</accession>
<accession>Q7Z502</accession>
<accession>Q96DL2</accession>
<accession>Q96H05</accession>
<name>C1QC_HUMAN</name>
<reference key="1">
    <citation type="journal article" date="1991" name="Biochem. J.">
        <title>Characterization and organization of the genes encoding the A-, B- and C-chains of human complement subcomponent C1q. The complete derived amino acid sequence of human C1q.</title>
        <authorList>
            <person name="Sellar G.C."/>
            <person name="Blake D.J."/>
            <person name="Reid K.B.M."/>
        </authorList>
    </citation>
    <scope>NUCLEOTIDE SEQUENCE [GENOMIC DNA]</scope>
    <source>
        <tissue>Monocyte</tissue>
    </source>
</reference>
<reference key="2">
    <citation type="submission" date="2003-07" db="EMBL/GenBank/DDBJ databases">
        <title>Cloning and characterization of a novel human cDNA homology to murine C1q C-chain mRNA.</title>
        <authorList>
            <person name="Dai F.Y."/>
            <person name="Yu L."/>
            <person name="Wan Y.Z."/>
            <person name="Zhang H.L."/>
            <person name="Huang J."/>
            <person name="Zhao S.Y."/>
        </authorList>
    </citation>
    <scope>NUCLEOTIDE SEQUENCE [MRNA]</scope>
</reference>
<reference key="3">
    <citation type="journal article" date="2004" name="Nat. Genet.">
        <title>Complete sequencing and characterization of 21,243 full-length human cDNAs.</title>
        <authorList>
            <person name="Ota T."/>
            <person name="Suzuki Y."/>
            <person name="Nishikawa T."/>
            <person name="Otsuki T."/>
            <person name="Sugiyama T."/>
            <person name="Irie R."/>
            <person name="Wakamatsu A."/>
            <person name="Hayashi K."/>
            <person name="Sato H."/>
            <person name="Nagai K."/>
            <person name="Kimura K."/>
            <person name="Makita H."/>
            <person name="Sekine M."/>
            <person name="Obayashi M."/>
            <person name="Nishi T."/>
            <person name="Shibahara T."/>
            <person name="Tanaka T."/>
            <person name="Ishii S."/>
            <person name="Yamamoto J."/>
            <person name="Saito K."/>
            <person name="Kawai Y."/>
            <person name="Isono Y."/>
            <person name="Nakamura Y."/>
            <person name="Nagahari K."/>
            <person name="Murakami K."/>
            <person name="Yasuda T."/>
            <person name="Iwayanagi T."/>
            <person name="Wagatsuma M."/>
            <person name="Shiratori A."/>
            <person name="Sudo H."/>
            <person name="Hosoiri T."/>
            <person name="Kaku Y."/>
            <person name="Kodaira H."/>
            <person name="Kondo H."/>
            <person name="Sugawara M."/>
            <person name="Takahashi M."/>
            <person name="Kanda K."/>
            <person name="Yokoi T."/>
            <person name="Furuya T."/>
            <person name="Kikkawa E."/>
            <person name="Omura Y."/>
            <person name="Abe K."/>
            <person name="Kamihara K."/>
            <person name="Katsuta N."/>
            <person name="Sato K."/>
            <person name="Tanikawa M."/>
            <person name="Yamazaki M."/>
            <person name="Ninomiya K."/>
            <person name="Ishibashi T."/>
            <person name="Yamashita H."/>
            <person name="Murakawa K."/>
            <person name="Fujimori K."/>
            <person name="Tanai H."/>
            <person name="Kimata M."/>
            <person name="Watanabe M."/>
            <person name="Hiraoka S."/>
            <person name="Chiba Y."/>
            <person name="Ishida S."/>
            <person name="Ono Y."/>
            <person name="Takiguchi S."/>
            <person name="Watanabe S."/>
            <person name="Yosida M."/>
            <person name="Hotuta T."/>
            <person name="Kusano J."/>
            <person name="Kanehori K."/>
            <person name="Takahashi-Fujii A."/>
            <person name="Hara H."/>
            <person name="Tanase T.-O."/>
            <person name="Nomura Y."/>
            <person name="Togiya S."/>
            <person name="Komai F."/>
            <person name="Hara R."/>
            <person name="Takeuchi K."/>
            <person name="Arita M."/>
            <person name="Imose N."/>
            <person name="Musashino K."/>
            <person name="Yuuki H."/>
            <person name="Oshima A."/>
            <person name="Sasaki N."/>
            <person name="Aotsuka S."/>
            <person name="Yoshikawa Y."/>
            <person name="Matsunawa H."/>
            <person name="Ichihara T."/>
            <person name="Shiohata N."/>
            <person name="Sano S."/>
            <person name="Moriya S."/>
            <person name="Momiyama H."/>
            <person name="Satoh N."/>
            <person name="Takami S."/>
            <person name="Terashima Y."/>
            <person name="Suzuki O."/>
            <person name="Nakagawa S."/>
            <person name="Senoh A."/>
            <person name="Mizoguchi H."/>
            <person name="Goto Y."/>
            <person name="Shimizu F."/>
            <person name="Wakebe H."/>
            <person name="Hishigaki H."/>
            <person name="Watanabe T."/>
            <person name="Sugiyama A."/>
            <person name="Takemoto M."/>
            <person name="Kawakami B."/>
            <person name="Yamazaki M."/>
            <person name="Watanabe K."/>
            <person name="Kumagai A."/>
            <person name="Itakura S."/>
            <person name="Fukuzumi Y."/>
            <person name="Fujimori Y."/>
            <person name="Komiyama M."/>
            <person name="Tashiro H."/>
            <person name="Tanigami A."/>
            <person name="Fujiwara T."/>
            <person name="Ono T."/>
            <person name="Yamada K."/>
            <person name="Fujii Y."/>
            <person name="Ozaki K."/>
            <person name="Hirao M."/>
            <person name="Ohmori Y."/>
            <person name="Kawabata A."/>
            <person name="Hikiji T."/>
            <person name="Kobatake N."/>
            <person name="Inagaki H."/>
            <person name="Ikema Y."/>
            <person name="Okamoto S."/>
            <person name="Okitani R."/>
            <person name="Kawakami T."/>
            <person name="Noguchi S."/>
            <person name="Itoh T."/>
            <person name="Shigeta K."/>
            <person name="Senba T."/>
            <person name="Matsumura K."/>
            <person name="Nakajima Y."/>
            <person name="Mizuno T."/>
            <person name="Morinaga M."/>
            <person name="Sasaki M."/>
            <person name="Togashi T."/>
            <person name="Oyama M."/>
            <person name="Hata H."/>
            <person name="Watanabe M."/>
            <person name="Komatsu T."/>
            <person name="Mizushima-Sugano J."/>
            <person name="Satoh T."/>
            <person name="Shirai Y."/>
            <person name="Takahashi Y."/>
            <person name="Nakagawa K."/>
            <person name="Okumura K."/>
            <person name="Nagase T."/>
            <person name="Nomura N."/>
            <person name="Kikuchi H."/>
            <person name="Masuho Y."/>
            <person name="Yamashita R."/>
            <person name="Nakai K."/>
            <person name="Yada T."/>
            <person name="Nakamura Y."/>
            <person name="Ohara O."/>
            <person name="Isogai T."/>
            <person name="Sugano S."/>
        </authorList>
    </citation>
    <scope>NUCLEOTIDE SEQUENCE [LARGE SCALE MRNA]</scope>
    <source>
        <tissue>Cerebellum</tissue>
    </source>
</reference>
<reference key="4">
    <citation type="journal article" date="2006" name="Nature">
        <title>The DNA sequence and biological annotation of human chromosome 1.</title>
        <authorList>
            <person name="Gregory S.G."/>
            <person name="Barlow K.F."/>
            <person name="McLay K.E."/>
            <person name="Kaul R."/>
            <person name="Swarbreck D."/>
            <person name="Dunham A."/>
            <person name="Scott C.E."/>
            <person name="Howe K.L."/>
            <person name="Woodfine K."/>
            <person name="Spencer C.C.A."/>
            <person name="Jones M.C."/>
            <person name="Gillson C."/>
            <person name="Searle S."/>
            <person name="Zhou Y."/>
            <person name="Kokocinski F."/>
            <person name="McDonald L."/>
            <person name="Evans R."/>
            <person name="Phillips K."/>
            <person name="Atkinson A."/>
            <person name="Cooper R."/>
            <person name="Jones C."/>
            <person name="Hall R.E."/>
            <person name="Andrews T.D."/>
            <person name="Lloyd C."/>
            <person name="Ainscough R."/>
            <person name="Almeida J.P."/>
            <person name="Ambrose K.D."/>
            <person name="Anderson F."/>
            <person name="Andrew R.W."/>
            <person name="Ashwell R.I.S."/>
            <person name="Aubin K."/>
            <person name="Babbage A.K."/>
            <person name="Bagguley C.L."/>
            <person name="Bailey J."/>
            <person name="Beasley H."/>
            <person name="Bethel G."/>
            <person name="Bird C.P."/>
            <person name="Bray-Allen S."/>
            <person name="Brown J.Y."/>
            <person name="Brown A.J."/>
            <person name="Buckley D."/>
            <person name="Burton J."/>
            <person name="Bye J."/>
            <person name="Carder C."/>
            <person name="Chapman J.C."/>
            <person name="Clark S.Y."/>
            <person name="Clarke G."/>
            <person name="Clee C."/>
            <person name="Cobley V."/>
            <person name="Collier R.E."/>
            <person name="Corby N."/>
            <person name="Coville G.J."/>
            <person name="Davies J."/>
            <person name="Deadman R."/>
            <person name="Dunn M."/>
            <person name="Earthrowl M."/>
            <person name="Ellington A.G."/>
            <person name="Errington H."/>
            <person name="Frankish A."/>
            <person name="Frankland J."/>
            <person name="French L."/>
            <person name="Garner P."/>
            <person name="Garnett J."/>
            <person name="Gay L."/>
            <person name="Ghori M.R.J."/>
            <person name="Gibson R."/>
            <person name="Gilby L.M."/>
            <person name="Gillett W."/>
            <person name="Glithero R.J."/>
            <person name="Grafham D.V."/>
            <person name="Griffiths C."/>
            <person name="Griffiths-Jones S."/>
            <person name="Grocock R."/>
            <person name="Hammond S."/>
            <person name="Harrison E.S.I."/>
            <person name="Hart E."/>
            <person name="Haugen E."/>
            <person name="Heath P.D."/>
            <person name="Holmes S."/>
            <person name="Holt K."/>
            <person name="Howden P.J."/>
            <person name="Hunt A.R."/>
            <person name="Hunt S.E."/>
            <person name="Hunter G."/>
            <person name="Isherwood J."/>
            <person name="James R."/>
            <person name="Johnson C."/>
            <person name="Johnson D."/>
            <person name="Joy A."/>
            <person name="Kay M."/>
            <person name="Kershaw J.K."/>
            <person name="Kibukawa M."/>
            <person name="Kimberley A.M."/>
            <person name="King A."/>
            <person name="Knights A.J."/>
            <person name="Lad H."/>
            <person name="Laird G."/>
            <person name="Lawlor S."/>
            <person name="Leongamornlert D.A."/>
            <person name="Lloyd D.M."/>
            <person name="Loveland J."/>
            <person name="Lovell J."/>
            <person name="Lush M.J."/>
            <person name="Lyne R."/>
            <person name="Martin S."/>
            <person name="Mashreghi-Mohammadi M."/>
            <person name="Matthews L."/>
            <person name="Matthews N.S.W."/>
            <person name="McLaren S."/>
            <person name="Milne S."/>
            <person name="Mistry S."/>
            <person name="Moore M.J.F."/>
            <person name="Nickerson T."/>
            <person name="O'Dell C.N."/>
            <person name="Oliver K."/>
            <person name="Palmeiri A."/>
            <person name="Palmer S.A."/>
            <person name="Parker A."/>
            <person name="Patel D."/>
            <person name="Pearce A.V."/>
            <person name="Peck A.I."/>
            <person name="Pelan S."/>
            <person name="Phelps K."/>
            <person name="Phillimore B.J."/>
            <person name="Plumb R."/>
            <person name="Rajan J."/>
            <person name="Raymond C."/>
            <person name="Rouse G."/>
            <person name="Saenphimmachak C."/>
            <person name="Sehra H.K."/>
            <person name="Sheridan E."/>
            <person name="Shownkeen R."/>
            <person name="Sims S."/>
            <person name="Skuce C.D."/>
            <person name="Smith M."/>
            <person name="Steward C."/>
            <person name="Subramanian S."/>
            <person name="Sycamore N."/>
            <person name="Tracey A."/>
            <person name="Tromans A."/>
            <person name="Van Helmond Z."/>
            <person name="Wall M."/>
            <person name="Wallis J.M."/>
            <person name="White S."/>
            <person name="Whitehead S.L."/>
            <person name="Wilkinson J.E."/>
            <person name="Willey D.L."/>
            <person name="Williams H."/>
            <person name="Wilming L."/>
            <person name="Wray P.W."/>
            <person name="Wu Z."/>
            <person name="Coulson A."/>
            <person name="Vaudin M."/>
            <person name="Sulston J.E."/>
            <person name="Durbin R.M."/>
            <person name="Hubbard T."/>
            <person name="Wooster R."/>
            <person name="Dunham I."/>
            <person name="Carter N.P."/>
            <person name="McVean G."/>
            <person name="Ross M.T."/>
            <person name="Harrow J."/>
            <person name="Olson M.V."/>
            <person name="Beck S."/>
            <person name="Rogers J."/>
            <person name="Bentley D.R."/>
        </authorList>
    </citation>
    <scope>NUCLEOTIDE SEQUENCE [LARGE SCALE GENOMIC DNA]</scope>
</reference>
<reference key="5">
    <citation type="journal article" date="2004" name="Genome Res.">
        <title>The status, quality, and expansion of the NIH full-length cDNA project: the Mammalian Gene Collection (MGC).</title>
        <authorList>
            <consortium name="The MGC Project Team"/>
        </authorList>
    </citation>
    <scope>NUCLEOTIDE SEQUENCE [LARGE SCALE MRNA]</scope>
    <source>
        <tissue>Brain</tissue>
    </source>
</reference>
<reference key="6">
    <citation type="journal article" date="1979" name="Biochem. J.">
        <title>Complete amino acid sequences of the three collagen-like regions present in subcomponent C1q of the first component of human complement.</title>
        <authorList>
            <person name="Reid K.B.M."/>
        </authorList>
    </citation>
    <scope>PROTEIN SEQUENCE OF 29-122</scope>
    <scope>SUBCELLULAR LOCATION</scope>
    <scope>HYDROXYLATION AT PRO-36; PRO-39; PRO-42; PRO-45; PRO-54; PRO-63; LYS-75; PRO-81; PRO-93; PRO-96; PRO-99 AND PRO-105</scope>
    <scope>GLYCOSYLATION AT LYS-75</scope>
</reference>
<reference key="7">
    <citation type="journal article" date="1978" name="Biochem. J.">
        <title>Amino acid sequence of the N-terminal 108 amino acid residues of the B chain of subcomponent C1q of the first component of human complement.</title>
        <authorList>
            <person name="Reid K.B.M."/>
            <person name="Thompson E.O.P."/>
        </authorList>
    </citation>
    <scope>DISULFIDE BOND</scope>
</reference>
<reference key="8">
    <citation type="journal article" date="1980" name="J. Biol. Chem.">
        <title>Activation of a complex of C1r and C1s subcomponents of human complement C1 by the third subcomponent C1q.</title>
        <authorList>
            <person name="Lin T.Y."/>
            <person name="Fletcher D.S."/>
        </authorList>
    </citation>
    <scope>FUNCTION</scope>
    <scope>SUBUNIT</scope>
</reference>
<reference key="9">
    <citation type="journal article" date="1980" name="Nature">
        <title>The Clq receptor site on immunoglobulin G.</title>
        <authorList>
            <person name="Burton D.R."/>
            <person name="Boyd J."/>
            <person name="Brampton A.D."/>
            <person name="Easterbrook-Smith S.B."/>
            <person name="Emanuel E.J."/>
            <person name="Novotny J."/>
            <person name="Rademacher T.W."/>
            <person name="van Schravendijk M.R."/>
            <person name="Sternberg M.J."/>
            <person name="Dwek R.A."/>
        </authorList>
    </citation>
    <scope>FUNCTION</scope>
</reference>
<reference key="10">
    <citation type="journal article" date="1982" name="Proc. Natl. Acad. Sci. U.S.A.">
        <title>Ultrastructure of the first component of human complement: electron microscopy of the crosslinked complex.</title>
        <authorList>
            <person name="Strang C.J."/>
            <person name="Siegel R.C."/>
            <person name="Phillips M.L."/>
            <person name="Poon P.H."/>
            <person name="Schumaker V.N."/>
        </authorList>
    </citation>
    <scope>SUBUNIT</scope>
</reference>
<reference key="11">
    <citation type="journal article" date="1983" name="J. Biol. Chem.">
        <title>The binding properties of human complement component C1q. Interaction with mucopolysaccharides.</title>
        <authorList>
            <person name="Almeda S."/>
            <person name="Rosenberg R.D."/>
            <person name="Bing D.H."/>
        </authorList>
    </citation>
    <scope>ACTIVITY REGULATION</scope>
</reference>
<reference key="12">
    <citation type="journal article" date="1985" name="Biochem. J.">
        <title>Molecular modelling of human complement subcomponent C1q and its complex with C1r2C1s2 derived from neutron-scattering curves and hydrodynamic properties.</title>
        <authorList>
            <person name="Perkins S.J."/>
        </authorList>
    </citation>
    <scope>SUBUNIT</scope>
</reference>
<reference key="13">
    <citation type="journal article" date="1988" name="Nature">
        <title>The binding site for C1q on IgG.</title>
        <authorList>
            <person name="Duncan A.R."/>
            <person name="Winter G."/>
        </authorList>
    </citation>
    <scope>FUNCTION</scope>
</reference>
<reference key="14">
    <citation type="journal article" date="2003" name="J. Immunol.">
        <title>Modular organization of the carboxyl-terminal, globular head region of human C1q A, B, and C chains.</title>
        <authorList>
            <person name="Kishore U."/>
            <person name="Gupta S.K."/>
            <person name="Perdikoulis M.V."/>
            <person name="Kojouharova M.S."/>
            <person name="Urban B.C."/>
            <person name="Reid K.B."/>
        </authorList>
    </citation>
    <scope>FUNCTION FOLLOWING ASSOCIATION WITH IMMUNOGLOBULIN MU</scope>
</reference>
<reference key="15">
    <citation type="journal article" date="2008" name="Biochemistry">
        <title>Interaction of human C1q with IgG and IgM: revisited.</title>
        <authorList>
            <person name="Gadjeva M.G."/>
            <person name="Rouseva M.M."/>
            <person name="Zlatarova A.S."/>
            <person name="Reid K.B."/>
            <person name="Kishore U."/>
            <person name="Kojouharova M.S."/>
        </authorList>
    </citation>
    <scope>FUNCTION FOLLOWING ASSOCIATION WITH IMMUNOGLOBULIN MU</scope>
    <scope>MUTAGENESIS OF HIS-129 AND LYS-198</scope>
</reference>
<reference key="16">
    <citation type="journal article" date="2003" name="J. Biol. Chem.">
        <title>The crystal structure of the globular head of complement protein C1q provides a basis for its versatile recognition properties.</title>
        <authorList>
            <person name="Gaboriaud C."/>
            <person name="Juanhuix J."/>
            <person name="Gruez A."/>
            <person name="Lacroix M."/>
            <person name="Darnault C."/>
            <person name="Pignol D."/>
            <person name="Verger D."/>
            <person name="Fontecilla-Camps J.-C."/>
            <person name="Arlaud G.J."/>
        </authorList>
    </citation>
    <scope>X-RAY CRYSTALLOGRAPHY (1.85 ANGSTROMS) OF 117-245 IN COMPLEX WITH C1QA AND C1QB</scope>
    <scope>SUBUNIT</scope>
</reference>
<reference key="17">
    <citation type="journal article" date="2009" name="Proc. Natl. Acad. Sci. U.S.A.">
        <title>The human IgM pentamer is a mushroom-shaped molecule with a flexural bias.</title>
        <authorList>
            <person name="Czajkowsky D.M."/>
            <person name="Shao Z."/>
        </authorList>
    </citation>
    <scope>FUNCTION</scope>
</reference>
<reference key="18">
    <citation type="journal article" date="2013" name="Proc. Natl. Acad. Sci. U.S.A.">
        <title>Expression of recombinant human complement C1q allows identification of the C1r/C1s-binding sites.</title>
        <authorList>
            <person name="Bally I."/>
            <person name="Ancelet S."/>
            <person name="Moriscot C."/>
            <person name="Gonnet F."/>
            <person name="Mantovani A."/>
            <person name="Daniel R."/>
            <person name="Schoehn G."/>
            <person name="Arlaud G.J."/>
            <person name="Thielens N.M."/>
        </authorList>
    </citation>
    <scope>SUBUNIT</scope>
    <scope>MUTAGENESIS OF LYS-86</scope>
</reference>
<reference key="19">
    <citation type="journal article" date="2014" name="Science">
        <title>Complement is activated by IgG hexamers assembled at the cell surface.</title>
        <authorList>
            <person name="Diebolder C.A."/>
            <person name="Beurskens F.J."/>
            <person name="de Jong R.N."/>
            <person name="Koning R.I."/>
            <person name="Strumane K."/>
            <person name="Lindorfer M.A."/>
            <person name="Voorhorst M."/>
            <person name="Ugurlar D."/>
            <person name="Rosati S."/>
            <person name="Heck A.J."/>
            <person name="van de Winkel J.G."/>
            <person name="Wilson I.A."/>
            <person name="Koster A.J."/>
            <person name="Taylor R.P."/>
            <person name="Saphire E.O."/>
            <person name="Burton D.R."/>
            <person name="Schuurman J."/>
            <person name="Gros P."/>
            <person name="Parren P.W."/>
        </authorList>
    </citation>
    <scope>FUNCTION</scope>
</reference>
<reference key="20">
    <citation type="journal article" date="2021" name="Proc. Natl. Acad. Sci. U.S.A.">
        <title>C1q binding to surface-bound IgG is stabilized by C1r2s2 proteases.</title>
        <authorList>
            <person name="Zwarthoff S.A."/>
            <person name="Widmer K."/>
            <person name="Kuipers A."/>
            <person name="Strasser J."/>
            <person name="Ruyken M."/>
            <person name="Aerts P.C."/>
            <person name="de Haas C.J.C."/>
            <person name="Ugurlar D."/>
            <person name="den Boer M.A."/>
            <person name="Vidarsson G."/>
            <person name="van Strijp J.A.G."/>
            <person name="Gros P."/>
            <person name="Parren P.W.H.I."/>
            <person name="van Kessel K.P.M."/>
            <person name="Preiner J."/>
            <person name="Beurskens F.J."/>
            <person name="Schuurman J."/>
            <person name="Ricklin D."/>
            <person name="Rooijakkers S.H.M."/>
        </authorList>
    </citation>
    <scope>FUNCTION</scope>
    <scope>SUBUNIT</scope>
    <scope>SUBCELLULAR LOCATION</scope>
</reference>
<reference evidence="25 26" key="21">
    <citation type="journal article" date="2008" name="J. Immunol.">
        <title>C1q binds phosphatidylserine and likely acts as a multiligand-bridging molecule in apoptotic cell recognition.</title>
        <authorList>
            <person name="Paidassi H."/>
            <person name="Tacnet-Delorme P."/>
            <person name="Garlatti V."/>
            <person name="Darnault C."/>
            <person name="Ghebrehiwet B."/>
            <person name="Gaboriaud C."/>
            <person name="Arlaud G.J."/>
            <person name="Frachet P."/>
        </authorList>
    </citation>
    <scope>X-RAY CRYSTALLOGRAPHY (1.90 ANGSTROMS) OF 115-245 IN COMPLEX WITH C1QA AND C1QB</scope>
    <scope>FUNCTION</scope>
    <scope>SUBUNIT</scope>
    <scope>SUBCELLULAR LOCATION</scope>
</reference>
<reference evidence="27 28" key="22">
    <citation type="journal article" date="2010" name="J. Immunol.">
        <title>C1q binds deoxyribose and heparan sulfate through neighboring sites of its recognition domain.</title>
        <authorList>
            <person name="Garlatti V."/>
            <person name="Chouquet A."/>
            <person name="Lunardi T."/>
            <person name="Vives R."/>
            <person name="Paidassi H."/>
            <person name="Lortat-Jacob H."/>
            <person name="Thielens N.M."/>
            <person name="Arlaud G.J."/>
            <person name="Gaboriaud C."/>
        </authorList>
    </citation>
    <scope>X-RAY CRYSTALLOGRAPHY (1.25 ANGSTROMS) OF 115-245 IN COMPLEX WITH C1QA AND C1QB</scope>
    <scope>ACTIVITY REGULATION</scope>
    <scope>SUBUNIT</scope>
</reference>
<reference evidence="29" key="23">
    <citation type="journal article" date="2018" name="Science">
        <title>Structures of C1-IgG1 provide insights into how danger pattern recognition activates complement.</title>
        <authorList>
            <person name="Ugurlar D."/>
            <person name="Howes S.C."/>
            <person name="de Kreuk B.J."/>
            <person name="Koning R.I."/>
            <person name="de Jong R.N."/>
            <person name="Beurskens F.J."/>
            <person name="Schuurman J."/>
            <person name="Koster A.J."/>
            <person name="Sharp T.H."/>
            <person name="Parren P.W.H.I."/>
            <person name="Gros P."/>
        </authorList>
    </citation>
    <scope>STRUCTURE BY ELECTRON MICROSCOPY (10.00 ANGSTROMS) OF 117-245 IN COMPLEX WITH C1QA; C1QC AND IMMUNOGLOBULIN GAMMA-1 HEAVY CHAIN</scope>
    <scope>SUBUNIT</scope>
    <scope>DISULFIDE BOND</scope>
</reference>
<reference key="24">
    <citation type="journal article" date="1998" name="Immunobiology">
        <title>Molecular basis of hereditary C1q deficiency.</title>
        <authorList>
            <person name="Petry F."/>
        </authorList>
    </citation>
    <scope>REVIEW ON C1Q DEFICIENCY</scope>
</reference>
<reference key="25">
    <citation type="journal article" date="1996" name="Arthritis Rheum.">
        <title>Homozygous hereditary C1q deficiency and systemic lupus erythematosus. A new family and the molecular basis of C1q deficiency in three families.</title>
        <authorList>
            <person name="Slingsby J.H."/>
            <person name="Norsworthy P."/>
            <person name="Pearce G."/>
            <person name="Vaishnaw A.K."/>
            <person name="Issler H."/>
            <person name="Morley B.J."/>
            <person name="Walport M.J."/>
        </authorList>
    </citation>
    <scope>VARIANT C1QD3 ARG-34</scope>
</reference>
<proteinExistence type="evidence at protein level"/>
<dbReference type="EMBL" id="AF087892">
    <property type="protein sequence ID" value="AAP97191.1"/>
    <property type="molecule type" value="mRNA"/>
</dbReference>
<dbReference type="EMBL" id="AK057792">
    <property type="protein sequence ID" value="BAB71575.1"/>
    <property type="molecule type" value="mRNA"/>
</dbReference>
<dbReference type="EMBL" id="AL158086">
    <property type="status" value="NOT_ANNOTATED_CDS"/>
    <property type="molecule type" value="Genomic_DNA"/>
</dbReference>
<dbReference type="EMBL" id="BC009016">
    <property type="protein sequence ID" value="AAH09016.1"/>
    <property type="molecule type" value="mRNA"/>
</dbReference>
<dbReference type="CCDS" id="CCDS227.1"/>
<dbReference type="PIR" id="S14351">
    <property type="entry name" value="C1HUQC"/>
</dbReference>
<dbReference type="RefSeq" id="NP_001107573.1">
    <property type="nucleotide sequence ID" value="NM_001114101.3"/>
</dbReference>
<dbReference type="RefSeq" id="NP_001334548.1">
    <property type="nucleotide sequence ID" value="NM_001347619.2"/>
</dbReference>
<dbReference type="RefSeq" id="NP_758957.2">
    <property type="nucleotide sequence ID" value="NM_172369.5"/>
</dbReference>
<dbReference type="PDB" id="1PK6">
    <property type="method" value="X-ray"/>
    <property type="resolution" value="1.85 A"/>
    <property type="chains" value="C=117-245"/>
</dbReference>
<dbReference type="PDB" id="2JG8">
    <property type="method" value="X-ray"/>
    <property type="resolution" value="2.05 A"/>
    <property type="chains" value="C/F=115-245"/>
</dbReference>
<dbReference type="PDB" id="2JG9">
    <property type="method" value="X-ray"/>
    <property type="resolution" value="1.90 A"/>
    <property type="chains" value="C/F=115-245"/>
</dbReference>
<dbReference type="PDB" id="2WNU">
    <property type="method" value="X-ray"/>
    <property type="resolution" value="2.30 A"/>
    <property type="chains" value="C/F=115-245"/>
</dbReference>
<dbReference type="PDB" id="2WNV">
    <property type="method" value="X-ray"/>
    <property type="resolution" value="1.25 A"/>
    <property type="chains" value="C/F=115-245"/>
</dbReference>
<dbReference type="PDB" id="5HKJ">
    <property type="method" value="X-ray"/>
    <property type="resolution" value="1.35 A"/>
    <property type="chains" value="A=115-245"/>
</dbReference>
<dbReference type="PDB" id="5HZF">
    <property type="method" value="X-ray"/>
    <property type="resolution" value="1.55 A"/>
    <property type="chains" value="A=115-245"/>
</dbReference>
<dbReference type="PDB" id="6FCZ">
    <property type="method" value="EM"/>
    <property type="resolution" value="10.00 A"/>
    <property type="chains" value="C=117-245"/>
</dbReference>
<dbReference type="PDB" id="6Z6V">
    <property type="method" value="X-ray"/>
    <property type="resolution" value="2.19 A"/>
    <property type="chains" value="C/F=115-245"/>
</dbReference>
<dbReference type="PDB" id="9C9L">
    <property type="method" value="EM"/>
    <property type="resolution" value="3.70 A"/>
    <property type="chains" value="C/N/O/P/Q/R=34-47"/>
</dbReference>
<dbReference type="PDB" id="9C9U">
    <property type="method" value="EM"/>
    <property type="resolution" value="4.50 A"/>
    <property type="chains" value="C/N/O/P/Q/R=29-63"/>
</dbReference>
<dbReference type="PDBsum" id="1PK6"/>
<dbReference type="PDBsum" id="2JG8"/>
<dbReference type="PDBsum" id="2JG9"/>
<dbReference type="PDBsum" id="2WNU"/>
<dbReference type="PDBsum" id="2WNV"/>
<dbReference type="PDBsum" id="5HKJ"/>
<dbReference type="PDBsum" id="5HZF"/>
<dbReference type="PDBsum" id="6FCZ"/>
<dbReference type="PDBsum" id="6Z6V"/>
<dbReference type="PDBsum" id="9C9L"/>
<dbReference type="PDBsum" id="9C9U"/>
<dbReference type="EMDB" id="EMD-4232"/>
<dbReference type="EMDB" id="EMD-45363"/>
<dbReference type="EMDB" id="EMD-45371"/>
<dbReference type="SASBDB" id="P02747"/>
<dbReference type="SMR" id="P02747"/>
<dbReference type="BioGRID" id="107175">
    <property type="interactions" value="139"/>
</dbReference>
<dbReference type="ComplexPortal" id="CPX-1919">
    <property type="entry name" value="Complement component C1q complex"/>
</dbReference>
<dbReference type="CORUM" id="P02747"/>
<dbReference type="FunCoup" id="P02747">
    <property type="interactions" value="109"/>
</dbReference>
<dbReference type="IntAct" id="P02747">
    <property type="interactions" value="34"/>
</dbReference>
<dbReference type="MINT" id="P02747"/>
<dbReference type="STRING" id="9606.ENSP00000363770"/>
<dbReference type="DrugBank" id="DB00112">
    <property type="generic name" value="Bevacizumab"/>
</dbReference>
<dbReference type="DrugBank" id="DB00002">
    <property type="generic name" value="Cetuximab"/>
</dbReference>
<dbReference type="DrugBank" id="DB09130">
    <property type="generic name" value="Copper"/>
</dbReference>
<dbReference type="DrugBank" id="DB00111">
    <property type="generic name" value="Daclizumab"/>
</dbReference>
<dbReference type="DrugBank" id="DB00005">
    <property type="generic name" value="Etanercept"/>
</dbReference>
<dbReference type="DrugBank" id="DB00110">
    <property type="generic name" value="Palivizumab"/>
</dbReference>
<dbReference type="DrugBank" id="DB01593">
    <property type="generic name" value="Zinc"/>
</dbReference>
<dbReference type="DrugBank" id="DB14487">
    <property type="generic name" value="Zinc acetate"/>
</dbReference>
<dbReference type="DrugBank" id="DB14533">
    <property type="generic name" value="Zinc chloride"/>
</dbReference>
<dbReference type="DrugBank" id="DB14548">
    <property type="generic name" value="Zinc sulfate, unspecified form"/>
</dbReference>
<dbReference type="GlyCosmos" id="P02747">
    <property type="glycosylation" value="1 site, No reported glycans"/>
</dbReference>
<dbReference type="GlyGen" id="P02747">
    <property type="glycosylation" value="1 site"/>
</dbReference>
<dbReference type="PhosphoSitePlus" id="P02747"/>
<dbReference type="BioMuta" id="C1QC"/>
<dbReference type="DMDM" id="20178281"/>
<dbReference type="CPTAC" id="non-CPTAC-2652"/>
<dbReference type="jPOST" id="P02747"/>
<dbReference type="MassIVE" id="P02747"/>
<dbReference type="PaxDb" id="9606-ENSP00000363770"/>
<dbReference type="PeptideAtlas" id="P02747"/>
<dbReference type="ProteomicsDB" id="51563"/>
<dbReference type="Antibodypedia" id="691">
    <property type="antibodies" value="309 antibodies from 34 providers"/>
</dbReference>
<dbReference type="DNASU" id="714"/>
<dbReference type="Ensembl" id="ENST00000374637.1">
    <property type="protein sequence ID" value="ENSP00000363768.1"/>
    <property type="gene ID" value="ENSG00000159189.13"/>
</dbReference>
<dbReference type="Ensembl" id="ENST00000374639.7">
    <property type="protein sequence ID" value="ENSP00000363770.3"/>
    <property type="gene ID" value="ENSG00000159189.13"/>
</dbReference>
<dbReference type="Ensembl" id="ENST00000374640.9">
    <property type="protein sequence ID" value="ENSP00000363771.4"/>
    <property type="gene ID" value="ENSG00000159189.13"/>
</dbReference>
<dbReference type="Ensembl" id="ENST00000695751.1">
    <property type="protein sequence ID" value="ENSP00000512144.1"/>
    <property type="gene ID" value="ENSG00000159189.13"/>
</dbReference>
<dbReference type="GeneID" id="714"/>
<dbReference type="KEGG" id="hsa:714"/>
<dbReference type="MANE-Select" id="ENST00000374640.9">
    <property type="protein sequence ID" value="ENSP00000363771.4"/>
    <property type="RefSeq nucleotide sequence ID" value="NM_172369.5"/>
    <property type="RefSeq protein sequence ID" value="NP_758957.2"/>
</dbReference>
<dbReference type="UCSC" id="uc001bga.5">
    <property type="organism name" value="human"/>
</dbReference>
<dbReference type="AGR" id="HGNC:1245"/>
<dbReference type="CTD" id="714"/>
<dbReference type="DisGeNET" id="714"/>
<dbReference type="GeneCards" id="C1QC"/>
<dbReference type="HGNC" id="HGNC:1245">
    <property type="gene designation" value="C1QC"/>
</dbReference>
<dbReference type="HPA" id="ENSG00000159189">
    <property type="expression patterns" value="Tissue enhanced (lymphoid)"/>
</dbReference>
<dbReference type="MalaCards" id="C1QC"/>
<dbReference type="MIM" id="120575">
    <property type="type" value="gene"/>
</dbReference>
<dbReference type="MIM" id="620322">
    <property type="type" value="phenotype"/>
</dbReference>
<dbReference type="neXtProt" id="NX_P02747"/>
<dbReference type="OpenTargets" id="ENSG00000159189"/>
<dbReference type="Orphanet" id="169147">
    <property type="disease" value="Immunodeficiency due to a classical component pathway complement deficiency"/>
</dbReference>
<dbReference type="PharmGKB" id="PA25626"/>
<dbReference type="VEuPathDB" id="HostDB:ENSG00000159189"/>
<dbReference type="eggNOG" id="ENOG502RZM2">
    <property type="taxonomic scope" value="Eukaryota"/>
</dbReference>
<dbReference type="GeneTree" id="ENSGT00940000161227"/>
<dbReference type="HOGENOM" id="CLU_001074_0_2_1"/>
<dbReference type="InParanoid" id="P02747"/>
<dbReference type="OMA" id="RGTNEYP"/>
<dbReference type="OrthoDB" id="8964326at2759"/>
<dbReference type="PAN-GO" id="P02747">
    <property type="GO annotations" value="0 GO annotations based on evolutionary models"/>
</dbReference>
<dbReference type="PhylomeDB" id="P02747"/>
<dbReference type="TreeFam" id="TF329591"/>
<dbReference type="PathwayCommons" id="P02747"/>
<dbReference type="Reactome" id="R-HSA-166663">
    <property type="pathway name" value="Initial triggering of complement"/>
</dbReference>
<dbReference type="Reactome" id="R-HSA-173623">
    <property type="pathway name" value="Classical antibody-mediated complement activation"/>
</dbReference>
<dbReference type="Reactome" id="R-HSA-977606">
    <property type="pathway name" value="Regulation of Complement cascade"/>
</dbReference>
<dbReference type="SignaLink" id="P02747"/>
<dbReference type="SIGNOR" id="P02747"/>
<dbReference type="BioGRID-ORCS" id="714">
    <property type="hits" value="8 hits in 1148 CRISPR screens"/>
</dbReference>
<dbReference type="CD-CODE" id="FB4E32DD">
    <property type="entry name" value="Presynaptic clusters and postsynaptic densities"/>
</dbReference>
<dbReference type="ChiTaRS" id="C1QC">
    <property type="organism name" value="human"/>
</dbReference>
<dbReference type="EvolutionaryTrace" id="P02747"/>
<dbReference type="GenomeRNAi" id="714"/>
<dbReference type="Pharos" id="P02747">
    <property type="development level" value="Tbio"/>
</dbReference>
<dbReference type="PRO" id="PR:P02747"/>
<dbReference type="Proteomes" id="UP000005640">
    <property type="component" value="Chromosome 1"/>
</dbReference>
<dbReference type="RNAct" id="P02747">
    <property type="molecule type" value="protein"/>
</dbReference>
<dbReference type="Bgee" id="ENSG00000159189">
    <property type="expression patterns" value="Expressed in decidua and 170 other cell types or tissues"/>
</dbReference>
<dbReference type="ExpressionAtlas" id="P02747">
    <property type="expression patterns" value="baseline and differential"/>
</dbReference>
<dbReference type="GO" id="GO:0072562">
    <property type="term" value="C:blood microparticle"/>
    <property type="evidence" value="ECO:0007005"/>
    <property type="project" value="UniProtKB"/>
</dbReference>
<dbReference type="GO" id="GO:0005581">
    <property type="term" value="C:collagen trimer"/>
    <property type="evidence" value="ECO:0007669"/>
    <property type="project" value="UniProtKB-KW"/>
</dbReference>
<dbReference type="GO" id="GO:0062023">
    <property type="term" value="C:collagen-containing extracellular matrix"/>
    <property type="evidence" value="ECO:0007005"/>
    <property type="project" value="BHF-UCL"/>
</dbReference>
<dbReference type="GO" id="GO:0005602">
    <property type="term" value="C:complement component C1 complex"/>
    <property type="evidence" value="ECO:0000303"/>
    <property type="project" value="ComplexPortal"/>
</dbReference>
<dbReference type="GO" id="GO:0062167">
    <property type="term" value="C:complement component C1q complex"/>
    <property type="evidence" value="ECO:0000353"/>
    <property type="project" value="ComplexPortal"/>
</dbReference>
<dbReference type="GO" id="GO:0005576">
    <property type="term" value="C:extracellular region"/>
    <property type="evidence" value="ECO:0000314"/>
    <property type="project" value="ComplexPortal"/>
</dbReference>
<dbReference type="GO" id="GO:0005615">
    <property type="term" value="C:extracellular space"/>
    <property type="evidence" value="ECO:0007005"/>
    <property type="project" value="UniProtKB"/>
</dbReference>
<dbReference type="GO" id="GO:0098890">
    <property type="term" value="C:extrinsic component of postsynaptic membrane"/>
    <property type="evidence" value="ECO:0007669"/>
    <property type="project" value="Ensembl"/>
</dbReference>
<dbReference type="GO" id="GO:0098888">
    <property type="term" value="C:extrinsic component of presynaptic membrane"/>
    <property type="evidence" value="ECO:0007669"/>
    <property type="project" value="Ensembl"/>
</dbReference>
<dbReference type="GO" id="GO:0098978">
    <property type="term" value="C:glutamatergic synapse"/>
    <property type="evidence" value="ECO:0007669"/>
    <property type="project" value="Ensembl"/>
</dbReference>
<dbReference type="GO" id="GO:0098794">
    <property type="term" value="C:postsynapse"/>
    <property type="evidence" value="ECO:0000250"/>
    <property type="project" value="ARUK-UCL"/>
</dbReference>
<dbReference type="GO" id="GO:0045202">
    <property type="term" value="C:synapse"/>
    <property type="evidence" value="ECO:0000250"/>
    <property type="project" value="ARUK-UCL"/>
</dbReference>
<dbReference type="GO" id="GO:0006958">
    <property type="term" value="P:complement activation, classical pathway"/>
    <property type="evidence" value="ECO:0000314"/>
    <property type="project" value="ComplexPortal"/>
</dbReference>
<dbReference type="GO" id="GO:0006955">
    <property type="term" value="P:immune response"/>
    <property type="evidence" value="ECO:0000303"/>
    <property type="project" value="UniProtKB"/>
</dbReference>
<dbReference type="GO" id="GO:0045087">
    <property type="term" value="P:innate immune response"/>
    <property type="evidence" value="ECO:0007669"/>
    <property type="project" value="UniProtKB-KW"/>
</dbReference>
<dbReference type="GO" id="GO:0030853">
    <property type="term" value="P:negative regulation of granulocyte differentiation"/>
    <property type="evidence" value="ECO:0000314"/>
    <property type="project" value="BHF-UCL"/>
</dbReference>
<dbReference type="GO" id="GO:0045650">
    <property type="term" value="P:negative regulation of macrophage differentiation"/>
    <property type="evidence" value="ECO:0000314"/>
    <property type="project" value="BHF-UCL"/>
</dbReference>
<dbReference type="GO" id="GO:0098883">
    <property type="term" value="P:synapse pruning"/>
    <property type="evidence" value="ECO:0000250"/>
    <property type="project" value="ARUK-UCL"/>
</dbReference>
<dbReference type="FunFam" id="2.60.120.40:FF:000001">
    <property type="entry name" value="Complement C1q B chain"/>
    <property type="match status" value="1"/>
</dbReference>
<dbReference type="Gene3D" id="2.60.120.40">
    <property type="match status" value="1"/>
</dbReference>
<dbReference type="InterPro" id="IPR001073">
    <property type="entry name" value="C1q_dom"/>
</dbReference>
<dbReference type="InterPro" id="IPR008160">
    <property type="entry name" value="Collagen"/>
</dbReference>
<dbReference type="InterPro" id="IPR050392">
    <property type="entry name" value="Collagen/C1q_domain"/>
</dbReference>
<dbReference type="InterPro" id="IPR008983">
    <property type="entry name" value="Tumour_necrosis_fac-like_dom"/>
</dbReference>
<dbReference type="PANTHER" id="PTHR15427:SF29">
    <property type="entry name" value="COMPLEMENT C1Q SUBCOMPONENT SUBUNIT C"/>
    <property type="match status" value="1"/>
</dbReference>
<dbReference type="PANTHER" id="PTHR15427">
    <property type="entry name" value="EMILIN ELASTIN MICROFIBRIL INTERFACE-LOCATED PROTEIN ELASTIN MICROFIBRIL INTERFACER"/>
    <property type="match status" value="1"/>
</dbReference>
<dbReference type="Pfam" id="PF00386">
    <property type="entry name" value="C1q"/>
    <property type="match status" value="1"/>
</dbReference>
<dbReference type="Pfam" id="PF01391">
    <property type="entry name" value="Collagen"/>
    <property type="match status" value="1"/>
</dbReference>
<dbReference type="PRINTS" id="PR00007">
    <property type="entry name" value="COMPLEMNTC1Q"/>
</dbReference>
<dbReference type="SMART" id="SM00110">
    <property type="entry name" value="C1Q"/>
    <property type="match status" value="1"/>
</dbReference>
<dbReference type="SUPFAM" id="SSF49842">
    <property type="entry name" value="TNF-like"/>
    <property type="match status" value="1"/>
</dbReference>
<dbReference type="PROSITE" id="PS50871">
    <property type="entry name" value="C1Q"/>
    <property type="match status" value="1"/>
</dbReference>
<sequence>MDVGPSSLPHLGLKLLLLLLLLPLRGQANTGCYGIPGMPGLPGAPGKDGYDGLPGPKGEPGIPAIPGIRGPKGQKGEPGLPGHPGKNGPMGPPGMPGVPGPMGIPGEPGEEGRYKQKFQSVFTVTRQTHQPPAPNSLIRFNAVLTNPQGDYDTSTGKFTCKVPGLYYFVYHASHTANLCVLLYRSGVKVVTFCGHTSKTNQVNSGGVLLRLQVGEEVWLAVNDYYDMVGIQGSDSVFSGFLLFPD</sequence>
<protein>
    <recommendedName>
        <fullName evidence="23">Complement C1q subcomponent subunit C</fullName>
    </recommendedName>
</protein>
<organism>
    <name type="scientific">Homo sapiens</name>
    <name type="common">Human</name>
    <dbReference type="NCBI Taxonomy" id="9606"/>
    <lineage>
        <taxon>Eukaryota</taxon>
        <taxon>Metazoa</taxon>
        <taxon>Chordata</taxon>
        <taxon>Craniata</taxon>
        <taxon>Vertebrata</taxon>
        <taxon>Euteleostomi</taxon>
        <taxon>Mammalia</taxon>
        <taxon>Eutheria</taxon>
        <taxon>Euarchontoglires</taxon>
        <taxon>Primates</taxon>
        <taxon>Haplorrhini</taxon>
        <taxon>Catarrhini</taxon>
        <taxon>Hominidae</taxon>
        <taxon>Homo</taxon>
    </lineage>
</organism>
<gene>
    <name evidence="22 24" type="primary">C1QC</name>
    <name type="synonym">C1QG</name>
</gene>
<keyword id="KW-0002">3D-structure</keyword>
<keyword id="KW-0176">Collagen</keyword>
<keyword id="KW-0180">Complement pathway</keyword>
<keyword id="KW-0903">Direct protein sequencing</keyword>
<keyword id="KW-0225">Disease variant</keyword>
<keyword id="KW-1015">Disulfide bond</keyword>
<keyword id="KW-0325">Glycoprotein</keyword>
<keyword id="KW-0379">Hydroxylation</keyword>
<keyword id="KW-0391">Immunity</keyword>
<keyword id="KW-0399">Innate immunity</keyword>
<keyword id="KW-1267">Proteomics identification</keyword>
<keyword id="KW-1185">Reference proteome</keyword>
<keyword id="KW-0677">Repeat</keyword>
<keyword id="KW-0964">Secreted</keyword>
<keyword id="KW-0732">Signal</keyword>
<evidence type="ECO:0000255" key="1">
    <source>
        <dbReference type="PROSITE-ProRule" id="PRU00368"/>
    </source>
</evidence>
<evidence type="ECO:0000256" key="2">
    <source>
        <dbReference type="SAM" id="MobiDB-lite"/>
    </source>
</evidence>
<evidence type="ECO:0000269" key="3">
    <source>
    </source>
</evidence>
<evidence type="ECO:0000269" key="4">
    <source>
    </source>
</evidence>
<evidence type="ECO:0000269" key="5">
    <source>
    </source>
</evidence>
<evidence type="ECO:0000269" key="6">
    <source>
    </source>
</evidence>
<evidence type="ECO:0000269" key="7">
    <source>
    </source>
</evidence>
<evidence type="ECO:0000269" key="8">
    <source>
    </source>
</evidence>
<evidence type="ECO:0000269" key="9">
    <source>
    </source>
</evidence>
<evidence type="ECO:0000269" key="10">
    <source>
    </source>
</evidence>
<evidence type="ECO:0000269" key="11">
    <source>
    </source>
</evidence>
<evidence type="ECO:0000269" key="12">
    <source>
    </source>
</evidence>
<evidence type="ECO:0000269" key="13">
    <source>
    </source>
</evidence>
<evidence type="ECO:0000269" key="14">
    <source>
    </source>
</evidence>
<evidence type="ECO:0000269" key="15">
    <source>
    </source>
</evidence>
<evidence type="ECO:0000269" key="16">
    <source>
    </source>
</evidence>
<evidence type="ECO:0000269" key="17">
    <source>
    </source>
</evidence>
<evidence type="ECO:0000269" key="18">
    <source>
    </source>
</evidence>
<evidence type="ECO:0000269" key="19">
    <source>
    </source>
</evidence>
<evidence type="ECO:0000269" key="20">
    <source>
    </source>
</evidence>
<evidence type="ECO:0000269" key="21">
    <source>
    </source>
</evidence>
<evidence type="ECO:0000303" key="22">
    <source>
    </source>
</evidence>
<evidence type="ECO:0000305" key="23"/>
<evidence type="ECO:0000312" key="24">
    <source>
        <dbReference type="HGNC" id="HGNC:1245"/>
    </source>
</evidence>
<evidence type="ECO:0007744" key="25">
    <source>
        <dbReference type="PDB" id="2JG8"/>
    </source>
</evidence>
<evidence type="ECO:0007744" key="26">
    <source>
        <dbReference type="PDB" id="2JG9"/>
    </source>
</evidence>
<evidence type="ECO:0007744" key="27">
    <source>
        <dbReference type="PDB" id="2WNU"/>
    </source>
</evidence>
<evidence type="ECO:0007744" key="28">
    <source>
        <dbReference type="PDB" id="2WNV"/>
    </source>
</evidence>
<evidence type="ECO:0007744" key="29">
    <source>
        <dbReference type="PDB" id="6FCZ"/>
    </source>
</evidence>
<evidence type="ECO:0007829" key="30">
    <source>
        <dbReference type="PDB" id="2WNV"/>
    </source>
</evidence>
<evidence type="ECO:0007829" key="31">
    <source>
        <dbReference type="PDB" id="5HKJ"/>
    </source>
</evidence>
<evidence type="ECO:0007829" key="32">
    <source>
        <dbReference type="PDB" id="5HZF"/>
    </source>
</evidence>
<comment type="function">
    <text evidence="3 5 6 7 10 11 13 14 17 18">Core component of the complement C1 complex, a multiprotein complex that initiates the classical pathway of the complement system, a cascade of proteins that leads to phagocytosis and breakdown of pathogens and signaling that strengthens the adaptive immune system (PubMed:12847249, PubMed:19006321, PubMed:24626930, PubMed:29449492, PubMed:3258649, PubMed:34155115, PubMed:6249812, PubMed:6776418). The classical complement pathway is initiated by the C1Q subcomplex of the C1 complex, which specifically binds IgG or IgM immunoglobulins complexed with antigens, forming antigen-antibody complexes on the surface of pathogens: C1QA, together with C1QB and C1QC, specifically recognizes and binds the Fc regions of IgG or IgM via its C1q domain (PubMed:12847249, PubMed:19006321, PubMed:24626930, PubMed:29449492, PubMed:3258649, PubMed:6776418). Immunoglobulin-binding activates the proenzyme C1R, which cleaves C1S, initiating the proteolytic cascade of the complement system (PubMed:29449492). The C1Q subcomplex is activated by a hexamer of IgG complexed with antigens, while it is activated by a pentameric IgM (PubMed:19706439, PubMed:24626930, PubMed:29449492). The C1Q subcomplex also recognizes and binds phosphatidylserine exposed on the surface of cells undergoing programmed cell death, possibly promoting activation of the complement system (PubMed:18250442).</text>
</comment>
<comment type="activity regulation">
    <text evidence="8 16">The C1Q subcomplex is inhibited by sulfated molecules, such as triterpenoid sulfates, heparan sulfate, or chondroitin sulfates.</text>
</comment>
<comment type="subunit">
    <text evidence="4 5 8 9 11 12 14 17 19">Core component of the complement C1 complex, a calcium-dependent complex composed of 1 molecule of the C1Q subcomplex, 2 molecules of C1R and 2 molecules of C1S (PubMed:23650384, PubMed:29449492, PubMed:34155115, PubMed:6249812). The C1Q subcomplex is composed 18 subunits: 3 chains of C1QA, C1QB, and C1QC trimerize to form 6 collagen-like triple helices connected to six globular ligand-recognition modules (C1q domain) (PubMed:12960167, PubMed:18250442, PubMed:20548024, PubMed:29449492, PubMed:2988513, PubMed:6952210).</text>
</comment>
<comment type="interaction">
    <interactant intactId="EBI-1220222">
        <id>P02747</id>
    </interactant>
    <interactant intactId="EBI-14032968">
        <id>PRO_0000018590</id>
        <label>C1QBP</label>
        <dbReference type="UniProtKB" id="Q07021"/>
    </interactant>
    <organismsDiffer>false</organismsDiffer>
    <experiments>4</experiments>
</comment>
<comment type="interaction">
    <interactant intactId="EBI-1220222">
        <id>P02747</id>
    </interactant>
    <interactant intactId="EBI-947187">
        <id>Q9UHD9</id>
        <label>UBQLN2</label>
    </interactant>
    <organismsDiffer>false</organismsDiffer>
    <experiments>5</experiments>
</comment>
<comment type="interaction">
    <interactant intactId="EBI-1220222">
        <id>P02747</id>
    </interactant>
    <interactant intactId="EBI-17208605">
        <id>Q76KX8</id>
        <label>ZNF534</label>
    </interactant>
    <organismsDiffer>false</organismsDiffer>
    <experiments>3</experiments>
</comment>
<comment type="subcellular location">
    <subcellularLocation>
        <location evidence="5 11 15">Secreted</location>
    </subcellularLocation>
    <subcellularLocation>
        <location evidence="14">Cell surface</location>
    </subcellularLocation>
    <text evidence="14">Specifically binds IgG or IgM immunoglobulins complexed with antigens, forming antigen-antibody complexes on the surface of pathogens.</text>
</comment>
<comment type="domain">
    <text evidence="11">The C1q domain is the ligand-recognition domain, which specifically recognizes and binds the Fc regions of IgG or IgM immunoglobulins.</text>
</comment>
<comment type="domain">
    <text evidence="11">The collagen-like domain interacts with C1R and C1S proenzymes.</text>
</comment>
<comment type="PTM">
    <text evidence="15">O-linked glycans consist of Glc-Gal disaccharides bound to the oxygen atom of post-translationally added hydroxyl groups.</text>
</comment>
<comment type="disease" evidence="21">
    <disease id="DI-06646">
        <name>C1q deficiency 3</name>
        <acronym>C1QD3</acronym>
        <description>An autosomal recessive disorder caused by impaired activation of the complement classical pathway. It generally leads to severe immune complex disease characterized by recurrent skin lesions, chronic infections, an increased risk of systemic lupus erythematosus, and glomerulonephritis.</description>
        <dbReference type="MIM" id="620322"/>
    </disease>
    <text>The disease is caused by variants affecting the gene represented in this entry.</text>
</comment>
<feature type="signal peptide" evidence="15">
    <location>
        <begin position="1"/>
        <end position="28"/>
    </location>
</feature>
<feature type="chain" id="PRO_0000003524" description="Complement C1q subcomponent subunit C">
    <location>
        <begin position="29"/>
        <end position="245"/>
    </location>
</feature>
<feature type="domain" description="Collagen-like">
    <location>
        <begin position="31"/>
        <end position="112"/>
    </location>
</feature>
<feature type="domain" description="C1q" evidence="1">
    <location>
        <begin position="115"/>
        <end position="245"/>
    </location>
</feature>
<feature type="region of interest" description="Disordered" evidence="2">
    <location>
        <begin position="45"/>
        <end position="113"/>
    </location>
</feature>
<feature type="compositionally biased region" description="Low complexity" evidence="2">
    <location>
        <begin position="54"/>
        <end position="71"/>
    </location>
</feature>
<feature type="compositionally biased region" description="Pro residues" evidence="2">
    <location>
        <begin position="90"/>
        <end position="99"/>
    </location>
</feature>
<feature type="modified residue" description="4-hydroxyproline" evidence="15">
    <location>
        <position position="36"/>
    </location>
</feature>
<feature type="modified residue" description="4-hydroxyproline" evidence="15">
    <location>
        <position position="39"/>
    </location>
</feature>
<feature type="modified residue" description="4-hydroxyproline" evidence="15">
    <location>
        <position position="42"/>
    </location>
</feature>
<feature type="modified residue" description="4-hydroxyproline" evidence="15">
    <location>
        <position position="45"/>
    </location>
</feature>
<feature type="modified residue" description="4-hydroxyproline" evidence="15">
    <location>
        <position position="54"/>
    </location>
</feature>
<feature type="modified residue" description="4-hydroxyproline" evidence="15">
    <location>
        <position position="63"/>
    </location>
</feature>
<feature type="modified residue" description="5-hydroxylysine" evidence="15">
    <location>
        <position position="75"/>
    </location>
</feature>
<feature type="modified residue" description="4-hydroxyproline" evidence="15">
    <location>
        <position position="81"/>
    </location>
</feature>
<feature type="modified residue" description="4-hydroxyproline" evidence="15">
    <location>
        <position position="93"/>
    </location>
</feature>
<feature type="modified residue" description="4-hydroxyproline" evidence="15">
    <location>
        <position position="96"/>
    </location>
</feature>
<feature type="modified residue" description="4-hydroxyproline" evidence="15">
    <location>
        <position position="99"/>
    </location>
</feature>
<feature type="modified residue" description="4-hydroxyproline" evidence="15">
    <location>
        <position position="105"/>
    </location>
</feature>
<feature type="glycosylation site" description="O-linked (Gal...) hydroxylysine" evidence="15">
    <location>
        <position position="75"/>
    </location>
</feature>
<feature type="disulfide bond" description="Interchain" evidence="20">
    <location>
        <position position="32"/>
    </location>
</feature>
<feature type="disulfide bond" evidence="11 29">
    <location>
        <begin position="179"/>
        <end position="193"/>
    </location>
</feature>
<feature type="sequence variant" id="VAR_008542" description="In C1QD3; dbSNP:rs200206736." evidence="21">
    <original>G</original>
    <variation>R</variation>
    <location>
        <position position="34"/>
    </location>
</feature>
<feature type="mutagenesis site" description="In LysC58; impaired ability to associate with C1R and C1S." evidence="9">
    <original>K</original>
    <variation>A</variation>
    <location>
        <position position="86"/>
    </location>
</feature>
<feature type="mutagenesis site" description="Has no effect on binding to IgM." evidence="6">
    <original>H</original>
    <variation>A</variation>
    <location>
        <position position="129"/>
    </location>
</feature>
<feature type="mutagenesis site" description="Decreases binding to IgM." evidence="6">
    <original>K</original>
    <variation>E</variation>
    <location>
        <position position="198"/>
    </location>
</feature>
<feature type="sequence conflict" description="In Ref. 3; BAB71575." evidence="23" ref="3">
    <original>K</original>
    <variation>R</variation>
    <location>
        <position position="14"/>
    </location>
</feature>
<feature type="sequence conflict" description="In Ref. 1; no nucleotide entry." evidence="23" ref="1">
    <original>P</original>
    <variation>A</variation>
    <location>
        <position position="23"/>
    </location>
</feature>
<feature type="sequence conflict" description="In Ref. 2; AAP97191." evidence="23" ref="2">
    <original>GQ</original>
    <variation>AK</variation>
    <location>
        <begin position="26"/>
        <end position="27"/>
    </location>
</feature>
<feature type="sequence conflict" description="In Ref. 6; AA sequence." evidence="23" ref="6">
    <original>K</original>
    <variation>P</variation>
    <location>
        <position position="57"/>
    </location>
</feature>
<feature type="sequence conflict" description="In Ref. 6; AA sequence." evidence="23" ref="6">
    <original>P</original>
    <variation>K</variation>
    <location>
        <position position="66"/>
    </location>
</feature>
<feature type="sequence conflict" description="In Ref. 6; AA sequence." evidence="23" ref="6">
    <original>K</original>
    <variation>P</variation>
    <location>
        <position position="72"/>
    </location>
</feature>
<feature type="sequence conflict" description="In Ref. 6; AA sequence." evidence="23" ref="6">
    <original>P</original>
    <variation>K</variation>
    <location>
        <position position="84"/>
    </location>
</feature>
<feature type="sequence conflict" description="In Ref. 6; AA sequence." evidence="23" ref="6">
    <original>N</original>
    <variation>D</variation>
    <location>
        <position position="87"/>
    </location>
</feature>
<feature type="sequence conflict" description="In Ref. 6; AA sequence." evidence="23" ref="6">
    <original>M</original>
    <variation>N</variation>
    <location>
        <position position="90"/>
    </location>
</feature>
<feature type="sequence conflict" description="In Ref. 2; AAP97191." evidence="23" ref="2">
    <original>I</original>
    <variation>F</variation>
    <location>
        <position position="104"/>
    </location>
</feature>
<feature type="sequence conflict" description="In Ref. 2; AAP97191." evidence="23" ref="2">
    <original>G</original>
    <variation>E</variation>
    <location>
        <position position="149"/>
    </location>
</feature>
<feature type="sequence conflict" description="In Ref. 3; BAB71575." evidence="23" ref="3">
    <original>E</original>
    <variation>G</variation>
    <location>
        <position position="215"/>
    </location>
</feature>
<feature type="helix" evidence="32">
    <location>
        <begin position="116"/>
        <end position="118"/>
    </location>
</feature>
<feature type="strand" evidence="30">
    <location>
        <begin position="121"/>
        <end position="125"/>
    </location>
</feature>
<feature type="strand" evidence="30">
    <location>
        <begin position="142"/>
        <end position="145"/>
    </location>
</feature>
<feature type="turn" evidence="30">
    <location>
        <begin position="153"/>
        <end position="155"/>
    </location>
</feature>
<feature type="strand" evidence="31">
    <location>
        <begin position="157"/>
        <end position="159"/>
    </location>
</feature>
<feature type="strand" evidence="30">
    <location>
        <begin position="164"/>
        <end position="176"/>
    </location>
</feature>
<feature type="strand" evidence="30">
    <location>
        <begin position="178"/>
        <end position="184"/>
    </location>
</feature>
<feature type="strand" evidence="30">
    <location>
        <begin position="187"/>
        <end position="194"/>
    </location>
</feature>
<feature type="strand" evidence="30">
    <location>
        <begin position="197"/>
        <end position="199"/>
    </location>
</feature>
<feature type="strand" evidence="30">
    <location>
        <begin position="201"/>
        <end position="211"/>
    </location>
</feature>
<feature type="strand" evidence="30">
    <location>
        <begin position="216"/>
        <end position="225"/>
    </location>
</feature>
<feature type="strand" evidence="30">
    <location>
        <begin position="236"/>
        <end position="244"/>
    </location>
</feature>